<reference key="1">
    <citation type="journal article" date="2003" name="Proc. Natl. Acad. Sci. U.S.A.">
        <title>Complete genome sequence of the Q-fever pathogen, Coxiella burnetii.</title>
        <authorList>
            <person name="Seshadri R."/>
            <person name="Paulsen I.T."/>
            <person name="Eisen J.A."/>
            <person name="Read T.D."/>
            <person name="Nelson K.E."/>
            <person name="Nelson W.C."/>
            <person name="Ward N.L."/>
            <person name="Tettelin H."/>
            <person name="Davidsen T.M."/>
            <person name="Beanan M.J."/>
            <person name="DeBoy R.T."/>
            <person name="Daugherty S.C."/>
            <person name="Brinkac L.M."/>
            <person name="Madupu R."/>
            <person name="Dodson R.J."/>
            <person name="Khouri H.M."/>
            <person name="Lee K.H."/>
            <person name="Carty H.A."/>
            <person name="Scanlan D."/>
            <person name="Heinzen R.A."/>
            <person name="Thompson H.A."/>
            <person name="Samuel J.E."/>
            <person name="Fraser C.M."/>
            <person name="Heidelberg J.F."/>
        </authorList>
    </citation>
    <scope>NUCLEOTIDE SEQUENCE [LARGE SCALE GENOMIC DNA]</scope>
    <source>
        <strain>RSA 493 / Nine Mile phase I</strain>
    </source>
</reference>
<keyword id="KW-0067">ATP-binding</keyword>
<keyword id="KW-0319">Glycerol metabolism</keyword>
<keyword id="KW-0418">Kinase</keyword>
<keyword id="KW-0547">Nucleotide-binding</keyword>
<keyword id="KW-1185">Reference proteome</keyword>
<keyword id="KW-0808">Transferase</keyword>
<comment type="function">
    <text evidence="1">Key enzyme in the regulation of glycerol uptake and metabolism. Catalyzes the phosphorylation of glycerol to yield sn-glycerol 3-phosphate.</text>
</comment>
<comment type="catalytic activity">
    <reaction evidence="1">
        <text>glycerol + ATP = sn-glycerol 3-phosphate + ADP + H(+)</text>
        <dbReference type="Rhea" id="RHEA:21644"/>
        <dbReference type="ChEBI" id="CHEBI:15378"/>
        <dbReference type="ChEBI" id="CHEBI:17754"/>
        <dbReference type="ChEBI" id="CHEBI:30616"/>
        <dbReference type="ChEBI" id="CHEBI:57597"/>
        <dbReference type="ChEBI" id="CHEBI:456216"/>
        <dbReference type="EC" id="2.7.1.30"/>
    </reaction>
</comment>
<comment type="activity regulation">
    <text evidence="1">Inhibited by fructose 1,6-bisphosphate (FBP).</text>
</comment>
<comment type="pathway">
    <text evidence="1">Polyol metabolism; glycerol degradation via glycerol kinase pathway; sn-glycerol 3-phosphate from glycerol: step 1/1.</text>
</comment>
<comment type="similarity">
    <text evidence="1">Belongs to the FGGY kinase family.</text>
</comment>
<comment type="sequence caution" evidence="2">
    <conflict type="erroneous initiation">
        <sequence resource="EMBL-CDS" id="AAO90459"/>
    </conflict>
    <text>Extended N-terminus.</text>
</comment>
<name>GLPK_COXBU</name>
<organism>
    <name type="scientific">Coxiella burnetii (strain RSA 493 / Nine Mile phase I)</name>
    <dbReference type="NCBI Taxonomy" id="227377"/>
    <lineage>
        <taxon>Bacteria</taxon>
        <taxon>Pseudomonadati</taxon>
        <taxon>Pseudomonadota</taxon>
        <taxon>Gammaproteobacteria</taxon>
        <taxon>Legionellales</taxon>
        <taxon>Coxiellaceae</taxon>
        <taxon>Coxiella</taxon>
    </lineage>
</organism>
<accession>Q83D14</accession>
<evidence type="ECO:0000255" key="1">
    <source>
        <dbReference type="HAMAP-Rule" id="MF_00186"/>
    </source>
</evidence>
<evidence type="ECO:0000305" key="2"/>
<gene>
    <name evidence="1" type="primary">glpK</name>
    <name type="synonym">gplK</name>
    <name type="ordered locus">CBU_0932</name>
</gene>
<protein>
    <recommendedName>
        <fullName evidence="1">Glycerol kinase</fullName>
        <ecNumber evidence="1">2.7.1.30</ecNumber>
    </recommendedName>
    <alternativeName>
        <fullName evidence="1">ATP:glycerol 3-phosphotransferase</fullName>
    </alternativeName>
    <alternativeName>
        <fullName evidence="1">Glycerokinase</fullName>
        <shortName evidence="1">GK</shortName>
    </alternativeName>
</protein>
<feature type="chain" id="PRO_0000059449" description="Glycerol kinase">
    <location>
        <begin position="1"/>
        <end position="501"/>
    </location>
</feature>
<feature type="binding site" evidence="1">
    <location>
        <position position="12"/>
    </location>
    <ligand>
        <name>ADP</name>
        <dbReference type="ChEBI" id="CHEBI:456216"/>
    </ligand>
</feature>
<feature type="binding site" evidence="1">
    <location>
        <position position="12"/>
    </location>
    <ligand>
        <name>ATP</name>
        <dbReference type="ChEBI" id="CHEBI:30616"/>
    </ligand>
</feature>
<feature type="binding site" evidence="1">
    <location>
        <position position="12"/>
    </location>
    <ligand>
        <name>sn-glycerol 3-phosphate</name>
        <dbReference type="ChEBI" id="CHEBI:57597"/>
    </ligand>
</feature>
<feature type="binding site" evidence="1">
    <location>
        <position position="13"/>
    </location>
    <ligand>
        <name>ATP</name>
        <dbReference type="ChEBI" id="CHEBI:30616"/>
    </ligand>
</feature>
<feature type="binding site" evidence="1">
    <location>
        <position position="14"/>
    </location>
    <ligand>
        <name>ATP</name>
        <dbReference type="ChEBI" id="CHEBI:30616"/>
    </ligand>
</feature>
<feature type="binding site" evidence="1">
    <location>
        <position position="16"/>
    </location>
    <ligand>
        <name>ADP</name>
        <dbReference type="ChEBI" id="CHEBI:456216"/>
    </ligand>
</feature>
<feature type="binding site" evidence="1">
    <location>
        <position position="82"/>
    </location>
    <ligand>
        <name>glycerol</name>
        <dbReference type="ChEBI" id="CHEBI:17754"/>
    </ligand>
</feature>
<feature type="binding site" evidence="1">
    <location>
        <position position="82"/>
    </location>
    <ligand>
        <name>sn-glycerol 3-phosphate</name>
        <dbReference type="ChEBI" id="CHEBI:57597"/>
    </ligand>
</feature>
<feature type="binding site" evidence="1">
    <location>
        <position position="83"/>
    </location>
    <ligand>
        <name>glycerol</name>
        <dbReference type="ChEBI" id="CHEBI:17754"/>
    </ligand>
</feature>
<feature type="binding site" evidence="1">
    <location>
        <position position="83"/>
    </location>
    <ligand>
        <name>sn-glycerol 3-phosphate</name>
        <dbReference type="ChEBI" id="CHEBI:57597"/>
    </ligand>
</feature>
<feature type="binding site" evidence="1">
    <location>
        <position position="135"/>
    </location>
    <ligand>
        <name>glycerol</name>
        <dbReference type="ChEBI" id="CHEBI:17754"/>
    </ligand>
</feature>
<feature type="binding site" evidence="1">
    <location>
        <position position="135"/>
    </location>
    <ligand>
        <name>sn-glycerol 3-phosphate</name>
        <dbReference type="ChEBI" id="CHEBI:57597"/>
    </ligand>
</feature>
<feature type="binding site" evidence="1">
    <location>
        <position position="244"/>
    </location>
    <ligand>
        <name>glycerol</name>
        <dbReference type="ChEBI" id="CHEBI:17754"/>
    </ligand>
</feature>
<feature type="binding site" evidence="1">
    <location>
        <position position="244"/>
    </location>
    <ligand>
        <name>sn-glycerol 3-phosphate</name>
        <dbReference type="ChEBI" id="CHEBI:57597"/>
    </ligand>
</feature>
<feature type="binding site" evidence="1">
    <location>
        <position position="245"/>
    </location>
    <ligand>
        <name>glycerol</name>
        <dbReference type="ChEBI" id="CHEBI:17754"/>
    </ligand>
</feature>
<feature type="binding site" evidence="1">
    <location>
        <position position="266"/>
    </location>
    <ligand>
        <name>ADP</name>
        <dbReference type="ChEBI" id="CHEBI:456216"/>
    </ligand>
</feature>
<feature type="binding site" evidence="1">
    <location>
        <position position="266"/>
    </location>
    <ligand>
        <name>ATP</name>
        <dbReference type="ChEBI" id="CHEBI:30616"/>
    </ligand>
</feature>
<feature type="binding site" evidence="1">
    <location>
        <position position="309"/>
    </location>
    <ligand>
        <name>ADP</name>
        <dbReference type="ChEBI" id="CHEBI:456216"/>
    </ligand>
</feature>
<feature type="binding site" evidence="1">
    <location>
        <position position="309"/>
    </location>
    <ligand>
        <name>ATP</name>
        <dbReference type="ChEBI" id="CHEBI:30616"/>
    </ligand>
</feature>
<feature type="binding site" evidence="1">
    <location>
        <position position="409"/>
    </location>
    <ligand>
        <name>ADP</name>
        <dbReference type="ChEBI" id="CHEBI:456216"/>
    </ligand>
</feature>
<feature type="binding site" evidence="1">
    <location>
        <position position="409"/>
    </location>
    <ligand>
        <name>ATP</name>
        <dbReference type="ChEBI" id="CHEBI:30616"/>
    </ligand>
</feature>
<feature type="binding site" evidence="1">
    <location>
        <position position="413"/>
    </location>
    <ligand>
        <name>ADP</name>
        <dbReference type="ChEBI" id="CHEBI:456216"/>
    </ligand>
</feature>
<dbReference type="EC" id="2.7.1.30" evidence="1"/>
<dbReference type="EMBL" id="AE016828">
    <property type="protein sequence ID" value="AAO90459.2"/>
    <property type="status" value="ALT_INIT"/>
    <property type="molecule type" value="Genomic_DNA"/>
</dbReference>
<dbReference type="RefSeq" id="NP_819945.2">
    <property type="nucleotide sequence ID" value="NC_002971.3"/>
</dbReference>
<dbReference type="RefSeq" id="WP_010957900.1">
    <property type="nucleotide sequence ID" value="NC_002971.4"/>
</dbReference>
<dbReference type="SMR" id="Q83D14"/>
<dbReference type="STRING" id="227377.CBU_0932"/>
<dbReference type="EnsemblBacteria" id="AAO90459">
    <property type="protein sequence ID" value="AAO90459"/>
    <property type="gene ID" value="CBU_0932"/>
</dbReference>
<dbReference type="GeneID" id="1208825"/>
<dbReference type="KEGG" id="cbu:CBU_0932"/>
<dbReference type="PATRIC" id="fig|227377.7.peg.922"/>
<dbReference type="eggNOG" id="COG0554">
    <property type="taxonomic scope" value="Bacteria"/>
</dbReference>
<dbReference type="HOGENOM" id="CLU_009281_2_3_6"/>
<dbReference type="OrthoDB" id="9805576at2"/>
<dbReference type="UniPathway" id="UPA00618">
    <property type="reaction ID" value="UER00672"/>
</dbReference>
<dbReference type="Proteomes" id="UP000002671">
    <property type="component" value="Chromosome"/>
</dbReference>
<dbReference type="GO" id="GO:0005829">
    <property type="term" value="C:cytosol"/>
    <property type="evidence" value="ECO:0000318"/>
    <property type="project" value="GO_Central"/>
</dbReference>
<dbReference type="GO" id="GO:0005524">
    <property type="term" value="F:ATP binding"/>
    <property type="evidence" value="ECO:0007669"/>
    <property type="project" value="UniProtKB-UniRule"/>
</dbReference>
<dbReference type="GO" id="GO:0004370">
    <property type="term" value="F:glycerol kinase activity"/>
    <property type="evidence" value="ECO:0000250"/>
    <property type="project" value="UniProtKB"/>
</dbReference>
<dbReference type="GO" id="GO:0019563">
    <property type="term" value="P:glycerol catabolic process"/>
    <property type="evidence" value="ECO:0000318"/>
    <property type="project" value="GO_Central"/>
</dbReference>
<dbReference type="GO" id="GO:0006071">
    <property type="term" value="P:glycerol metabolic process"/>
    <property type="evidence" value="ECO:0000250"/>
    <property type="project" value="UniProtKB"/>
</dbReference>
<dbReference type="GO" id="GO:0006072">
    <property type="term" value="P:glycerol-3-phosphate metabolic process"/>
    <property type="evidence" value="ECO:0007669"/>
    <property type="project" value="InterPro"/>
</dbReference>
<dbReference type="CDD" id="cd07786">
    <property type="entry name" value="FGGY_EcGK_like"/>
    <property type="match status" value="1"/>
</dbReference>
<dbReference type="FunFam" id="3.30.420.40:FF:000007">
    <property type="entry name" value="Glycerol kinase"/>
    <property type="match status" value="1"/>
</dbReference>
<dbReference type="FunFam" id="3.30.420.40:FF:000177">
    <property type="entry name" value="Glycerol kinase"/>
    <property type="match status" value="1"/>
</dbReference>
<dbReference type="Gene3D" id="3.30.420.40">
    <property type="match status" value="2"/>
</dbReference>
<dbReference type="HAMAP" id="MF_00186">
    <property type="entry name" value="Glycerol_kin"/>
    <property type="match status" value="1"/>
</dbReference>
<dbReference type="InterPro" id="IPR043129">
    <property type="entry name" value="ATPase_NBD"/>
</dbReference>
<dbReference type="InterPro" id="IPR000577">
    <property type="entry name" value="Carb_kinase_FGGY"/>
</dbReference>
<dbReference type="InterPro" id="IPR018483">
    <property type="entry name" value="Carb_kinase_FGGY_CS"/>
</dbReference>
<dbReference type="InterPro" id="IPR018485">
    <property type="entry name" value="FGGY_C"/>
</dbReference>
<dbReference type="InterPro" id="IPR018484">
    <property type="entry name" value="FGGY_N"/>
</dbReference>
<dbReference type="InterPro" id="IPR005999">
    <property type="entry name" value="Glycerol_kin"/>
</dbReference>
<dbReference type="NCBIfam" id="TIGR01311">
    <property type="entry name" value="glycerol_kin"/>
    <property type="match status" value="1"/>
</dbReference>
<dbReference type="NCBIfam" id="NF000756">
    <property type="entry name" value="PRK00047.1"/>
    <property type="match status" value="1"/>
</dbReference>
<dbReference type="PANTHER" id="PTHR10196:SF78">
    <property type="entry name" value="GLYCEROL KINASE"/>
    <property type="match status" value="1"/>
</dbReference>
<dbReference type="PANTHER" id="PTHR10196">
    <property type="entry name" value="SUGAR KINASE"/>
    <property type="match status" value="1"/>
</dbReference>
<dbReference type="Pfam" id="PF02782">
    <property type="entry name" value="FGGY_C"/>
    <property type="match status" value="1"/>
</dbReference>
<dbReference type="Pfam" id="PF00370">
    <property type="entry name" value="FGGY_N"/>
    <property type="match status" value="1"/>
</dbReference>
<dbReference type="PIRSF" id="PIRSF000538">
    <property type="entry name" value="GlpK"/>
    <property type="match status" value="1"/>
</dbReference>
<dbReference type="SUPFAM" id="SSF53067">
    <property type="entry name" value="Actin-like ATPase domain"/>
    <property type="match status" value="2"/>
</dbReference>
<dbReference type="PROSITE" id="PS00933">
    <property type="entry name" value="FGGY_KINASES_1"/>
    <property type="match status" value="1"/>
</dbReference>
<dbReference type="PROSITE" id="PS00445">
    <property type="entry name" value="FGGY_KINASES_2"/>
    <property type="match status" value="1"/>
</dbReference>
<proteinExistence type="inferred from homology"/>
<sequence>MSSFILAIDQGTTSTRAILFNEEAKLVHYHHVEITQYFPQGGWVEHDPEEIWDSTLLCCRNVLEEASLRAADIAALGISNQRETTILWDRHTGQPLYRAIGWQDRRTVNFCEQLASQAGVLAKFVEKTGLILDPYFSCSKIKWILDNIKGAYEKAKRGELAFGTVDSYLLWKFTGGKCHATDATNASRTGLFNINQQRWDDELLTLFDIPKSLLPTVLDNCAQFGFTDLDLLGHKIPITAMIGDQQAAAVGQACIKPGMVKSTYGTGCFMLLNTGDQIIHSRNRLLATIAYRLNDTVTYGLEGSIFIAGAAVKWLRDPLHLIEKANDSESMASSVEDTGGVYLVPAFTGLGAPYWDPNARGALFGLTRNTQREHIVRAALEAVCYQSKDLVRAILNDGANLTTLRVDGGMAANNWLLQFLSDILGVNVDRSRCIESSALGTAFLAGLGAGLFDSLEEMTGLWQADRHFIPQMDPKKREELYDGWQKAVEKTLTPAAPLLFP</sequence>